<organism>
    <name type="scientific">Synechococcus sp. (strain WH7803)</name>
    <dbReference type="NCBI Taxonomy" id="32051"/>
    <lineage>
        <taxon>Bacteria</taxon>
        <taxon>Bacillati</taxon>
        <taxon>Cyanobacteriota</taxon>
        <taxon>Cyanophyceae</taxon>
        <taxon>Synechococcales</taxon>
        <taxon>Synechococcaceae</taxon>
        <taxon>Synechococcus</taxon>
    </lineage>
</organism>
<accession>A5GMB7</accession>
<dbReference type="EC" id="3.6.1.9" evidence="1"/>
<dbReference type="EMBL" id="CT971583">
    <property type="protein sequence ID" value="CAK24082.1"/>
    <property type="molecule type" value="Genomic_DNA"/>
</dbReference>
<dbReference type="SMR" id="A5GMB7"/>
<dbReference type="STRING" id="32051.SynWH7803_1656"/>
<dbReference type="KEGG" id="syx:SynWH7803_1656"/>
<dbReference type="eggNOG" id="COG0424">
    <property type="taxonomic scope" value="Bacteria"/>
</dbReference>
<dbReference type="HOGENOM" id="CLU_040416_1_2_3"/>
<dbReference type="OrthoDB" id="9807767at2"/>
<dbReference type="Proteomes" id="UP000001566">
    <property type="component" value="Chromosome"/>
</dbReference>
<dbReference type="GO" id="GO:0005737">
    <property type="term" value="C:cytoplasm"/>
    <property type="evidence" value="ECO:0007669"/>
    <property type="project" value="UniProtKB-SubCell"/>
</dbReference>
<dbReference type="GO" id="GO:0047429">
    <property type="term" value="F:nucleoside triphosphate diphosphatase activity"/>
    <property type="evidence" value="ECO:0007669"/>
    <property type="project" value="UniProtKB-EC"/>
</dbReference>
<dbReference type="GO" id="GO:0009117">
    <property type="term" value="P:nucleotide metabolic process"/>
    <property type="evidence" value="ECO:0007669"/>
    <property type="project" value="UniProtKB-KW"/>
</dbReference>
<dbReference type="CDD" id="cd00555">
    <property type="entry name" value="Maf"/>
    <property type="match status" value="1"/>
</dbReference>
<dbReference type="Gene3D" id="3.90.950.10">
    <property type="match status" value="1"/>
</dbReference>
<dbReference type="HAMAP" id="MF_00528">
    <property type="entry name" value="Maf"/>
    <property type="match status" value="1"/>
</dbReference>
<dbReference type="InterPro" id="IPR029001">
    <property type="entry name" value="ITPase-like_fam"/>
</dbReference>
<dbReference type="InterPro" id="IPR003697">
    <property type="entry name" value="Maf-like"/>
</dbReference>
<dbReference type="NCBIfam" id="TIGR00172">
    <property type="entry name" value="maf"/>
    <property type="match status" value="1"/>
</dbReference>
<dbReference type="PANTHER" id="PTHR43213">
    <property type="entry name" value="BIFUNCTIONAL DTTP/UTP PYROPHOSPHATASE/METHYLTRANSFERASE PROTEIN-RELATED"/>
    <property type="match status" value="1"/>
</dbReference>
<dbReference type="PANTHER" id="PTHR43213:SF5">
    <property type="entry name" value="BIFUNCTIONAL DTTP_UTP PYROPHOSPHATASE_METHYLTRANSFERASE PROTEIN-RELATED"/>
    <property type="match status" value="1"/>
</dbReference>
<dbReference type="Pfam" id="PF02545">
    <property type="entry name" value="Maf"/>
    <property type="match status" value="1"/>
</dbReference>
<dbReference type="PIRSF" id="PIRSF006305">
    <property type="entry name" value="Maf"/>
    <property type="match status" value="1"/>
</dbReference>
<dbReference type="SUPFAM" id="SSF52972">
    <property type="entry name" value="ITPase-like"/>
    <property type="match status" value="1"/>
</dbReference>
<comment type="function">
    <text evidence="1">Nucleoside triphosphate pyrophosphatase. May have a dual role in cell division arrest and in preventing the incorporation of modified nucleotides into cellular nucleic acids.</text>
</comment>
<comment type="catalytic activity">
    <reaction evidence="1">
        <text>a ribonucleoside 5'-triphosphate + H2O = a ribonucleoside 5'-phosphate + diphosphate + H(+)</text>
        <dbReference type="Rhea" id="RHEA:23996"/>
        <dbReference type="ChEBI" id="CHEBI:15377"/>
        <dbReference type="ChEBI" id="CHEBI:15378"/>
        <dbReference type="ChEBI" id="CHEBI:33019"/>
        <dbReference type="ChEBI" id="CHEBI:58043"/>
        <dbReference type="ChEBI" id="CHEBI:61557"/>
        <dbReference type="EC" id="3.6.1.9"/>
    </reaction>
</comment>
<comment type="catalytic activity">
    <reaction evidence="1">
        <text>a 2'-deoxyribonucleoside 5'-triphosphate + H2O = a 2'-deoxyribonucleoside 5'-phosphate + diphosphate + H(+)</text>
        <dbReference type="Rhea" id="RHEA:44644"/>
        <dbReference type="ChEBI" id="CHEBI:15377"/>
        <dbReference type="ChEBI" id="CHEBI:15378"/>
        <dbReference type="ChEBI" id="CHEBI:33019"/>
        <dbReference type="ChEBI" id="CHEBI:61560"/>
        <dbReference type="ChEBI" id="CHEBI:65317"/>
        <dbReference type="EC" id="3.6.1.9"/>
    </reaction>
</comment>
<comment type="cofactor">
    <cofactor evidence="1">
        <name>a divalent metal cation</name>
        <dbReference type="ChEBI" id="CHEBI:60240"/>
    </cofactor>
</comment>
<comment type="subcellular location">
    <subcellularLocation>
        <location evidence="1">Cytoplasm</location>
    </subcellularLocation>
</comment>
<comment type="similarity">
    <text evidence="1">Belongs to the Maf family.</text>
</comment>
<feature type="chain" id="PRO_1000060965" description="Nucleoside triphosphate pyrophosphatase">
    <location>
        <begin position="1"/>
        <end position="191"/>
    </location>
</feature>
<feature type="active site" description="Proton acceptor" evidence="1">
    <location>
        <position position="70"/>
    </location>
</feature>
<sequence>MLLLASASPARRRLLEQACIPHRVQVSGVDEDGIHHSEPPQLVCLLAEAKAKAVHGQLTDPSIHAVLGCDSVLAFEGEVFGKPADAEEAKARWRRMRGHWGDLHTGHCLIATSSTTAISSQCQCITTRVLFADLSDAEIDAYVSSGEPLQCAGGFALEGRGGCVVERLNGCYSNVIGLSLPLLRQWLPQDF</sequence>
<keyword id="KW-0963">Cytoplasm</keyword>
<keyword id="KW-0378">Hydrolase</keyword>
<keyword id="KW-0546">Nucleotide metabolism</keyword>
<keyword id="KW-1185">Reference proteome</keyword>
<gene>
    <name type="ordered locus">SynWH7803_1656</name>
</gene>
<evidence type="ECO:0000255" key="1">
    <source>
        <dbReference type="HAMAP-Rule" id="MF_00528"/>
    </source>
</evidence>
<protein>
    <recommendedName>
        <fullName evidence="1">Nucleoside triphosphate pyrophosphatase</fullName>
        <ecNumber evidence="1">3.6.1.9</ecNumber>
    </recommendedName>
    <alternativeName>
        <fullName evidence="1">Nucleotide pyrophosphatase</fullName>
        <shortName evidence="1">Nucleotide PPase</shortName>
    </alternativeName>
</protein>
<name>NTPP_SYNPW</name>
<reference key="1">
    <citation type="submission" date="2006-05" db="EMBL/GenBank/DDBJ databases">
        <authorList>
            <consortium name="Genoscope"/>
        </authorList>
    </citation>
    <scope>NUCLEOTIDE SEQUENCE [LARGE SCALE GENOMIC DNA]</scope>
    <source>
        <strain>WH7803</strain>
    </source>
</reference>
<proteinExistence type="inferred from homology"/>